<reference key="1">
    <citation type="journal article" date="2010" name="PLoS ONE">
        <title>Derivation of Escherichia coli O157:H7 from its O55:H7 precursor.</title>
        <authorList>
            <person name="Zhou Z."/>
            <person name="Li X."/>
            <person name="Liu B."/>
            <person name="Beutin L."/>
            <person name="Xu J."/>
            <person name="Ren Y."/>
            <person name="Feng L."/>
            <person name="Lan R."/>
            <person name="Reeves P.R."/>
            <person name="Wang L."/>
        </authorList>
    </citation>
    <scope>NUCLEOTIDE SEQUENCE [LARGE SCALE GENOMIC DNA]</scope>
    <source>
        <strain>CB9615 / EPEC</strain>
    </source>
</reference>
<dbReference type="EMBL" id="CP001846">
    <property type="protein sequence ID" value="ADD58883.1"/>
    <property type="molecule type" value="Genomic_DNA"/>
</dbReference>
<dbReference type="RefSeq" id="WP_001359418.1">
    <property type="nucleotide sequence ID" value="NC_013941.1"/>
</dbReference>
<dbReference type="SMR" id="D3QW22"/>
<dbReference type="KEGG" id="eok:G2583_4416"/>
<dbReference type="HOGENOM" id="CLU_497576_0_0_6"/>
<dbReference type="GO" id="GO:0005576">
    <property type="term" value="C:extracellular region"/>
    <property type="evidence" value="ECO:0007669"/>
    <property type="project" value="UniProtKB-SubCell"/>
</dbReference>
<dbReference type="GO" id="GO:0020002">
    <property type="term" value="C:host cell plasma membrane"/>
    <property type="evidence" value="ECO:0007669"/>
    <property type="project" value="UniProtKB-SubCell"/>
</dbReference>
<dbReference type="GO" id="GO:0016020">
    <property type="term" value="C:membrane"/>
    <property type="evidence" value="ECO:0007669"/>
    <property type="project" value="UniProtKB-KW"/>
</dbReference>
<dbReference type="Gene3D" id="4.10.820.10">
    <property type="entry name" value="Translocated intimin receptor, central domain"/>
    <property type="match status" value="1"/>
</dbReference>
<dbReference type="InterPro" id="IPR037003">
    <property type="entry name" value="Tir_central_sf"/>
</dbReference>
<dbReference type="InterPro" id="IPR022638">
    <property type="entry name" value="Transloc_intimin_rcpt"/>
</dbReference>
<dbReference type="InterPro" id="IPR022639">
    <property type="entry name" value="Transloc_intimin_rcpt_C"/>
</dbReference>
<dbReference type="InterPro" id="IPR003536">
    <property type="entry name" value="Transloc_intimin_rcpt_cen_dom"/>
</dbReference>
<dbReference type="InterPro" id="IPR022633">
    <property type="entry name" value="Transloc_intimin_rcpt_N"/>
</dbReference>
<dbReference type="NCBIfam" id="NF033637">
    <property type="entry name" value="transloc_TIR"/>
    <property type="match status" value="1"/>
</dbReference>
<dbReference type="Pfam" id="PF07489">
    <property type="entry name" value="Tir_receptor_C"/>
    <property type="match status" value="1"/>
</dbReference>
<dbReference type="Pfam" id="PF03549">
    <property type="entry name" value="Tir_receptor_M"/>
    <property type="match status" value="1"/>
</dbReference>
<dbReference type="Pfam" id="PF07490">
    <property type="entry name" value="Tir_receptor_N"/>
    <property type="match status" value="1"/>
</dbReference>
<dbReference type="PRINTS" id="PR01370">
    <property type="entry name" value="TRNSINTIMINR"/>
</dbReference>
<evidence type="ECO:0000250" key="1"/>
<evidence type="ECO:0000255" key="2"/>
<evidence type="ECO:0000256" key="3">
    <source>
        <dbReference type="SAM" id="MobiDB-lite"/>
    </source>
</evidence>
<evidence type="ECO:0000305" key="4"/>
<feature type="chain" id="PRO_0000414058" description="Translocated intimin receptor Tir">
    <location>
        <begin position="1"/>
        <end position="556"/>
    </location>
</feature>
<feature type="topological domain" description="Cytoplasmic" evidence="2">
    <location>
        <begin position="1"/>
        <end position="230"/>
    </location>
</feature>
<feature type="transmembrane region" description="Helical" evidence="2">
    <location>
        <begin position="231"/>
        <end position="251"/>
    </location>
</feature>
<feature type="topological domain" description="Extracellular" evidence="2">
    <location>
        <begin position="252"/>
        <end position="362"/>
    </location>
</feature>
<feature type="transmembrane region" description="Helical" evidence="2">
    <location>
        <begin position="363"/>
        <end position="383"/>
    </location>
</feature>
<feature type="topological domain" description="Cytoplasmic" evidence="2">
    <location>
        <begin position="384"/>
        <end position="556"/>
    </location>
</feature>
<feature type="region of interest" description="Disordered" evidence="3">
    <location>
        <begin position="1"/>
        <end position="44"/>
    </location>
</feature>
<feature type="region of interest" description="Disordered" evidence="3">
    <location>
        <begin position="182"/>
        <end position="226"/>
    </location>
</feature>
<feature type="region of interest" description="Disordered" evidence="3">
    <location>
        <begin position="257"/>
        <end position="280"/>
    </location>
</feature>
<feature type="region of interest" description="Disordered" evidence="3">
    <location>
        <begin position="388"/>
        <end position="449"/>
    </location>
</feature>
<feature type="region of interest" description="Disordered" evidence="3">
    <location>
        <begin position="531"/>
        <end position="556"/>
    </location>
</feature>
<feature type="short sequence motif" description="Essential for actin pedestal formation" evidence="1">
    <location>
        <begin position="454"/>
        <end position="456"/>
    </location>
</feature>
<feature type="compositionally biased region" description="Basic and acidic residues" evidence="3">
    <location>
        <begin position="182"/>
        <end position="205"/>
    </location>
</feature>
<feature type="compositionally biased region" description="Low complexity" evidence="3">
    <location>
        <begin position="213"/>
        <end position="224"/>
    </location>
</feature>
<feature type="compositionally biased region" description="Low complexity" evidence="3">
    <location>
        <begin position="257"/>
        <end position="277"/>
    </location>
</feature>
<feature type="compositionally biased region" description="Polar residues" evidence="3">
    <location>
        <begin position="402"/>
        <end position="422"/>
    </location>
</feature>
<feature type="compositionally biased region" description="Low complexity" evidence="3">
    <location>
        <begin position="434"/>
        <end position="448"/>
    </location>
</feature>
<feature type="compositionally biased region" description="Polar residues" evidence="3">
    <location>
        <begin position="536"/>
        <end position="546"/>
    </location>
</feature>
<protein>
    <recommendedName>
        <fullName>Translocated intimin receptor Tir</fullName>
    </recommendedName>
    <alternativeName>
        <fullName>Secreted effector protein Tir</fullName>
    </alternativeName>
</protein>
<organism>
    <name type="scientific">Escherichia coli O55:H7 (strain CB9615 / EPEC)</name>
    <dbReference type="NCBI Taxonomy" id="701177"/>
    <lineage>
        <taxon>Bacteria</taxon>
        <taxon>Pseudomonadati</taxon>
        <taxon>Pseudomonadota</taxon>
        <taxon>Gammaproteobacteria</taxon>
        <taxon>Enterobacterales</taxon>
        <taxon>Enterobacteriaceae</taxon>
        <taxon>Escherichia</taxon>
    </lineage>
</organism>
<keyword id="KW-1032">Host cell membrane</keyword>
<keyword id="KW-1043">Host membrane</keyword>
<keyword id="KW-0472">Membrane</keyword>
<keyword id="KW-0597">Phosphoprotein</keyword>
<keyword id="KW-0675">Receptor</keyword>
<keyword id="KW-0964">Secreted</keyword>
<keyword id="KW-0812">Transmembrane</keyword>
<keyword id="KW-1133">Transmembrane helix</keyword>
<keyword id="KW-0843">Virulence</keyword>
<comment type="function">
    <text evidence="1">Multifunctional protein that is required for efficient pedestal formation in host epithelial cells during infection. The extracellular region acts as a receptor for bacterial intimin, allowing the bacterium to attach tightly to the host-cell surface. Simultaneously, the intracellular region initiates a signaling cascade in the host cell, which leads to actin polymerization and formation of actin pedestals at the sites of bacterial adhesion (By similarity).</text>
</comment>
<comment type="subunit">
    <text evidence="1">Interacts with intimin and host proteins.</text>
</comment>
<comment type="subcellular location">
    <subcellularLocation>
        <location evidence="1">Secreted</location>
    </subcellularLocation>
    <subcellularLocation>
        <location evidence="1">Host cell membrane</location>
        <topology evidence="1">Multi-pass membrane protein</topology>
    </subcellularLocation>
    <text evidence="1">Secreted via the type III secretion system (T3SS). Released into the host cytoplasm via T3SS and then independently inserts into the plasma membrane from a cytoplasmic location. In host cells, localizes to the tip of the actin pedestal (By similarity).</text>
</comment>
<comment type="PTM">
    <text evidence="1">Phosphorylated by host kinases.</text>
</comment>
<comment type="similarity">
    <text evidence="4">Belongs to the Tir receptor family.</text>
</comment>
<proteinExistence type="inferred from homology"/>
<gene>
    <name type="primary">tir</name>
    <name type="synonym">espE</name>
    <name type="ordered locus">G2583_4416</name>
</gene>
<sequence>MPIGNLGHNPNVNNSIPPAPPLPSQTDGAGGRGQLINSTGPLGSRALFTPVRNSMADSGDNRASDVPGLPVNPMRLAASEITLNDGFEVLHDHGPLDTLNRQIGSSVFRVETQEDGKHIAVGQRNGVETSVVLSDQEYARLQSIDPEGKDKFVFTGGRGGAGHAMVTVASDITEARQRILELLEPKGTGESKGAGESKGVGELRESNSGAENTTETQTSTSTSSLRSDPKLWLALGTVATGLIGLAATGIVQALALTPEPDSPTTTDPDAAASATETATRDQLTKEAFQNPDNQKVNIDELGNAIPSGVLKDDVVANIEEQAKAAGEEAKQQAIENNAQAQKKYDEQQAKRQEELKVSSGAGYGLSGALILGGGIGVAVTAALHRKNQPVEQTTTTTTTTTSARTVENKPANNTPAQGNVDTPGSEDTMESRRSSMASTSSTFFDTSSIGTVQNPYADVKTSLHDSQVPTSNSNTSVQNMGNTDSVVYSTIQHPPRDTTDNGARLLGNPSAGIQSTYARLALSGGLRHDMGGLTGGSNSAVNTSNNPPAPGSHRFV</sequence>
<name>TIR_ECOCB</name>
<accession>D3QW22</accession>